<geneLocation type="chloroplast"/>
<accession>Q85FR1</accession>
<proteinExistence type="inferred from homology"/>
<protein>
    <recommendedName>
        <fullName evidence="1">ATP synthase subunit b', chloroplastic</fullName>
    </recommendedName>
    <alternativeName>
        <fullName evidence="1">ATP synthase F(0) sector subunit b'</fullName>
    </alternativeName>
    <alternativeName>
        <fullName evidence="1">ATPase subunit II</fullName>
    </alternativeName>
</protein>
<reference key="1">
    <citation type="journal article" date="2003" name="DNA Res.">
        <title>Complete sequence and analysis of the plastid genome of the unicellular red alga Cyanidioschyzon merolae.</title>
        <authorList>
            <person name="Ohta N."/>
            <person name="Matsuzaki M."/>
            <person name="Misumi O."/>
            <person name="Miyagishima S.-Y."/>
            <person name="Nozaki H."/>
            <person name="Tanaka K."/>
            <person name="Shin-i T."/>
            <person name="Kohara Y."/>
            <person name="Kuroiwa T."/>
        </authorList>
    </citation>
    <scope>NUCLEOTIDE SEQUENCE [LARGE SCALE GENOMIC DNA]</scope>
    <source>
        <strain>NIES-3377 / 10D</strain>
    </source>
</reference>
<organism>
    <name type="scientific">Cyanidioschyzon merolae (strain NIES-3377 / 10D)</name>
    <name type="common">Unicellular red alga</name>
    <dbReference type="NCBI Taxonomy" id="280699"/>
    <lineage>
        <taxon>Eukaryota</taxon>
        <taxon>Rhodophyta</taxon>
        <taxon>Bangiophyceae</taxon>
        <taxon>Cyanidiales</taxon>
        <taxon>Cyanidiaceae</taxon>
        <taxon>Cyanidioschyzon</taxon>
    </lineage>
</organism>
<keyword id="KW-0066">ATP synthesis</keyword>
<keyword id="KW-0138">CF(0)</keyword>
<keyword id="KW-0150">Chloroplast</keyword>
<keyword id="KW-0375">Hydrogen ion transport</keyword>
<keyword id="KW-0406">Ion transport</keyword>
<keyword id="KW-0472">Membrane</keyword>
<keyword id="KW-0934">Plastid</keyword>
<keyword id="KW-1185">Reference proteome</keyword>
<keyword id="KW-0793">Thylakoid</keyword>
<keyword id="KW-0812">Transmembrane</keyword>
<keyword id="KW-1133">Transmembrane helix</keyword>
<keyword id="KW-0813">Transport</keyword>
<gene>
    <name evidence="1" type="primary">atpF2</name>
    <name evidence="1" type="synonym">atpG</name>
</gene>
<feature type="chain" id="PRO_0000369061" description="ATP synthase subunit b', chloroplastic">
    <location>
        <begin position="1"/>
        <end position="143"/>
    </location>
</feature>
<feature type="transmembrane region" description="Helical" evidence="1">
    <location>
        <begin position="12"/>
        <end position="31"/>
    </location>
</feature>
<evidence type="ECO:0000255" key="1">
    <source>
        <dbReference type="HAMAP-Rule" id="MF_01399"/>
    </source>
</evidence>
<name>ATPF2_CYAM1</name>
<comment type="function">
    <text evidence="1">F(1)F(0) ATP synthase produces ATP from ADP in the presence of a proton or sodium gradient. F-type ATPases consist of two structural domains, F(1) containing the extramembraneous catalytic core and F(0) containing the membrane proton channel, linked together by a central stalk and a peripheral stalk. During catalysis, ATP synthesis in the catalytic domain of F(1) is coupled via a rotary mechanism of the central stalk subunits to proton translocation.</text>
</comment>
<comment type="function">
    <text evidence="1">Component of the F(0) channel, it forms part of the peripheral stalk, linking F(1) to F(0). The b'-subunit is a diverged and duplicated form of b found in plants and photosynthetic bacteria.</text>
</comment>
<comment type="subunit">
    <text evidence="1">F-type ATPases have 2 components, F(1) - the catalytic core - and F(0) - the membrane proton channel. F(1) has five subunits: alpha(3), beta(3), gamma(1), delta(1), epsilon(1). F(0) has four main subunits: a(1), b(1), b'(1) and c(10-14). The alpha and beta chains form an alternating ring which encloses part of the gamma chain. F(1) is attached to F(0) by a central stalk formed by the gamma and epsilon chains, while a peripheral stalk is formed by the delta, b and b' chains.</text>
</comment>
<comment type="subcellular location">
    <subcellularLocation>
        <location evidence="1">Plastid</location>
        <location evidence="1">Chloroplast thylakoid membrane</location>
        <topology evidence="1">Single-pass membrane protein</topology>
    </subcellularLocation>
</comment>
<comment type="miscellaneous">
    <text>In plastids the F-type ATPase is also known as CF(1)CF(0).</text>
</comment>
<comment type="similarity">
    <text evidence="1">Belongs to the ATPase B chain family.</text>
</comment>
<sequence>MSTGLFDFNGTLPVMGLQVVLLSWLLEQILYSPIQGVIQKRQNKIQQELQLAADQLQKAQQLTQEYQTQLQKAREKARERIRQVQQEAQTMMEDQLKQAQQQMTQLFNEAMQQLEQQKQQALMNLSNQVDEVAKFILSKLMKQ</sequence>
<dbReference type="EMBL" id="AB002583">
    <property type="protein sequence ID" value="BAC76284.1"/>
    <property type="molecule type" value="Genomic_DNA"/>
</dbReference>
<dbReference type="RefSeq" id="NP_849122.1">
    <property type="nucleotide sequence ID" value="NC_004799.1"/>
</dbReference>
<dbReference type="SMR" id="Q85FR1"/>
<dbReference type="STRING" id="280699.Q85FR1"/>
<dbReference type="EnsemblPlants" id="CMV222CT">
    <property type="protein sequence ID" value="CMV222CT"/>
    <property type="gene ID" value="CMV222C"/>
</dbReference>
<dbReference type="GeneID" id="844870"/>
<dbReference type="Gramene" id="CMV222CT">
    <property type="protein sequence ID" value="CMV222CT"/>
    <property type="gene ID" value="CMV222C"/>
</dbReference>
<dbReference type="KEGG" id="cme:CymeCp190"/>
<dbReference type="eggNOG" id="ENOG502S8NX">
    <property type="taxonomic scope" value="Eukaryota"/>
</dbReference>
<dbReference type="HOGENOM" id="CLU_079215_9_0_1"/>
<dbReference type="Proteomes" id="UP000007014">
    <property type="component" value="Chloroplast"/>
</dbReference>
<dbReference type="GO" id="GO:0009535">
    <property type="term" value="C:chloroplast thylakoid membrane"/>
    <property type="evidence" value="ECO:0007669"/>
    <property type="project" value="UniProtKB-SubCell"/>
</dbReference>
<dbReference type="GO" id="GO:0045259">
    <property type="term" value="C:proton-transporting ATP synthase complex"/>
    <property type="evidence" value="ECO:0007669"/>
    <property type="project" value="UniProtKB-KW"/>
</dbReference>
<dbReference type="GO" id="GO:0046933">
    <property type="term" value="F:proton-transporting ATP synthase activity, rotational mechanism"/>
    <property type="evidence" value="ECO:0007669"/>
    <property type="project" value="UniProtKB-UniRule"/>
</dbReference>
<dbReference type="GO" id="GO:0046961">
    <property type="term" value="F:proton-transporting ATPase activity, rotational mechanism"/>
    <property type="evidence" value="ECO:0007669"/>
    <property type="project" value="TreeGrafter"/>
</dbReference>
<dbReference type="CDD" id="cd06503">
    <property type="entry name" value="ATP-synt_Fo_b"/>
    <property type="match status" value="1"/>
</dbReference>
<dbReference type="HAMAP" id="MF_01398">
    <property type="entry name" value="ATP_synth_b_bprime"/>
    <property type="match status" value="1"/>
</dbReference>
<dbReference type="HAMAP" id="MF_01399">
    <property type="entry name" value="ATP_synth_bprime"/>
    <property type="match status" value="1"/>
</dbReference>
<dbReference type="InterPro" id="IPR034679">
    <property type="entry name" value="ATP_synth_b"/>
</dbReference>
<dbReference type="InterPro" id="IPR002146">
    <property type="entry name" value="ATP_synth_b/b'su_bac/chlpt"/>
</dbReference>
<dbReference type="InterPro" id="IPR050059">
    <property type="entry name" value="ATP_synthase_B_chain"/>
</dbReference>
<dbReference type="PANTHER" id="PTHR33445">
    <property type="entry name" value="ATP SYNTHASE SUBUNIT B', CHLOROPLASTIC"/>
    <property type="match status" value="1"/>
</dbReference>
<dbReference type="PANTHER" id="PTHR33445:SF2">
    <property type="entry name" value="ATP SYNTHASE SUBUNIT B', CHLOROPLASTIC"/>
    <property type="match status" value="1"/>
</dbReference>
<dbReference type="Pfam" id="PF00430">
    <property type="entry name" value="ATP-synt_B"/>
    <property type="match status" value="1"/>
</dbReference>
<dbReference type="SUPFAM" id="SSF58113">
    <property type="entry name" value="Apolipoprotein A-I"/>
    <property type="match status" value="1"/>
</dbReference>